<proteinExistence type="inferred from homology"/>
<dbReference type="EC" id="2.3.2.27" evidence="2"/>
<dbReference type="EMBL" id="AB004537">
    <property type="protein sequence ID" value="BAA21416.1"/>
    <property type="status" value="ALT_SEQ"/>
    <property type="molecule type" value="Genomic_DNA"/>
</dbReference>
<dbReference type="EMBL" id="CU329671">
    <property type="protein sequence ID" value="CAB51769.1"/>
    <property type="molecule type" value="Genomic_DNA"/>
</dbReference>
<dbReference type="PIR" id="T39702">
    <property type="entry name" value="T39702"/>
</dbReference>
<dbReference type="RefSeq" id="NP_595592.1">
    <property type="nucleotide sequence ID" value="NM_001021488.2"/>
</dbReference>
<dbReference type="SMR" id="Q9UUF0"/>
<dbReference type="BioGRID" id="276325">
    <property type="interactions" value="23"/>
</dbReference>
<dbReference type="FunCoup" id="Q9UUF0">
    <property type="interactions" value="58"/>
</dbReference>
<dbReference type="STRING" id="284812.Q9UUF0"/>
<dbReference type="iPTMnet" id="Q9UUF0"/>
<dbReference type="PaxDb" id="4896-SPBC17A3.10.1"/>
<dbReference type="EnsemblFungi" id="SPBC17A3.10.1">
    <property type="protein sequence ID" value="SPBC17A3.10.1:pep"/>
    <property type="gene ID" value="SPBC17A3.10"/>
</dbReference>
<dbReference type="GeneID" id="2539774"/>
<dbReference type="KEGG" id="spo:2539774"/>
<dbReference type="PomBase" id="SPBC17A3.10">
    <property type="gene designation" value="pas4"/>
</dbReference>
<dbReference type="VEuPathDB" id="FungiDB:SPBC17A3.10"/>
<dbReference type="eggNOG" id="KOG0317">
    <property type="taxonomic scope" value="Eukaryota"/>
</dbReference>
<dbReference type="HOGENOM" id="CLU_918773_0_0_1"/>
<dbReference type="InParanoid" id="Q9UUF0"/>
<dbReference type="OMA" id="GHIYCWH"/>
<dbReference type="Reactome" id="R-SPO-8866654">
    <property type="pathway name" value="E3 ubiquitin ligases ubiquitinate target proteins"/>
</dbReference>
<dbReference type="Reactome" id="R-SPO-9033241">
    <property type="pathway name" value="Peroxisomal protein import"/>
</dbReference>
<dbReference type="UniPathway" id="UPA00143"/>
<dbReference type="PRO" id="PR:Q9UUF0"/>
<dbReference type="Proteomes" id="UP000002485">
    <property type="component" value="Chromosome II"/>
</dbReference>
<dbReference type="GO" id="GO:0005783">
    <property type="term" value="C:endoplasmic reticulum"/>
    <property type="evidence" value="ECO:0007005"/>
    <property type="project" value="PomBase"/>
</dbReference>
<dbReference type="GO" id="GO:0005778">
    <property type="term" value="C:peroxisomal membrane"/>
    <property type="evidence" value="ECO:0000318"/>
    <property type="project" value="GO_Central"/>
</dbReference>
<dbReference type="GO" id="GO:0061630">
    <property type="term" value="F:ubiquitin protein ligase activity"/>
    <property type="evidence" value="ECO:0000255"/>
    <property type="project" value="PomBase"/>
</dbReference>
<dbReference type="GO" id="GO:0008270">
    <property type="term" value="F:zinc ion binding"/>
    <property type="evidence" value="ECO:0000255"/>
    <property type="project" value="PomBase"/>
</dbReference>
<dbReference type="GO" id="GO:0016558">
    <property type="term" value="P:protein import into peroxisome matrix"/>
    <property type="evidence" value="ECO:0000318"/>
    <property type="project" value="GO_Central"/>
</dbReference>
<dbReference type="GO" id="GO:0016567">
    <property type="term" value="P:protein ubiquitination"/>
    <property type="evidence" value="ECO:0007669"/>
    <property type="project" value="UniProtKB-UniPathway"/>
</dbReference>
<dbReference type="CDD" id="cd16527">
    <property type="entry name" value="RING-HC_PEX10"/>
    <property type="match status" value="1"/>
</dbReference>
<dbReference type="Gene3D" id="3.30.40.10">
    <property type="entry name" value="Zinc/RING finger domain, C3HC4 (zinc finger)"/>
    <property type="match status" value="1"/>
</dbReference>
<dbReference type="InterPro" id="IPR025654">
    <property type="entry name" value="PEX2/10"/>
</dbReference>
<dbReference type="InterPro" id="IPR001841">
    <property type="entry name" value="Znf_RING"/>
</dbReference>
<dbReference type="InterPro" id="IPR013083">
    <property type="entry name" value="Znf_RING/FYVE/PHD"/>
</dbReference>
<dbReference type="InterPro" id="IPR017907">
    <property type="entry name" value="Znf_RING_CS"/>
</dbReference>
<dbReference type="PANTHER" id="PTHR23350">
    <property type="entry name" value="PEROXISOME ASSEMBLY PROTEIN 10"/>
    <property type="match status" value="1"/>
</dbReference>
<dbReference type="PANTHER" id="PTHR23350:SF0">
    <property type="entry name" value="PEROXISOME BIOGENESIS FACTOR 10"/>
    <property type="match status" value="1"/>
</dbReference>
<dbReference type="Pfam" id="PF13639">
    <property type="entry name" value="zf-RING_2"/>
    <property type="match status" value="1"/>
</dbReference>
<dbReference type="SMART" id="SM00184">
    <property type="entry name" value="RING"/>
    <property type="match status" value="1"/>
</dbReference>
<dbReference type="SUPFAM" id="SSF57850">
    <property type="entry name" value="RING/U-box"/>
    <property type="match status" value="1"/>
</dbReference>
<dbReference type="PROSITE" id="PS00518">
    <property type="entry name" value="ZF_RING_1"/>
    <property type="match status" value="1"/>
</dbReference>
<dbReference type="PROSITE" id="PS50089">
    <property type="entry name" value="ZF_RING_2"/>
    <property type="match status" value="1"/>
</dbReference>
<organism>
    <name type="scientific">Schizosaccharomyces pombe (strain 972 / ATCC 24843)</name>
    <name type="common">Fission yeast</name>
    <dbReference type="NCBI Taxonomy" id="284812"/>
    <lineage>
        <taxon>Eukaryota</taxon>
        <taxon>Fungi</taxon>
        <taxon>Dikarya</taxon>
        <taxon>Ascomycota</taxon>
        <taxon>Taphrinomycotina</taxon>
        <taxon>Schizosaccharomycetes</taxon>
        <taxon>Schizosaccharomycetales</taxon>
        <taxon>Schizosaccharomycetaceae</taxon>
        <taxon>Schizosaccharomyces</taxon>
    </lineage>
</organism>
<feature type="chain" id="PRO_0000056380" description="Peroxisome biogenesis factor 10">
    <location>
        <begin position="1"/>
        <end position="306"/>
    </location>
</feature>
<feature type="topological domain" description="Peroxisomal matrix" evidence="5">
    <location>
        <begin position="1"/>
        <end position="52"/>
    </location>
</feature>
<feature type="transmembrane region" description="Helical" evidence="1">
    <location>
        <begin position="53"/>
        <end position="84"/>
    </location>
</feature>
<feature type="topological domain" description="Cytoplasmic" evidence="5">
    <location>
        <begin position="85"/>
        <end position="147"/>
    </location>
</feature>
<feature type="transmembrane region" description="Helical" evidence="1">
    <location>
        <begin position="148"/>
        <end position="174"/>
    </location>
</feature>
<feature type="topological domain" description="Peroxisomal matrix" evidence="5">
    <location>
        <begin position="175"/>
        <end position="202"/>
    </location>
</feature>
<feature type="transmembrane region" description="Helical" evidence="3">
    <location>
        <begin position="203"/>
        <end position="219"/>
    </location>
</feature>
<feature type="topological domain" description="Cytoplasmic" evidence="5">
    <location>
        <begin position="220"/>
        <end position="306"/>
    </location>
</feature>
<feature type="zinc finger region" description="RING-type" evidence="4">
    <location>
        <begin position="256"/>
        <end position="294"/>
    </location>
</feature>
<feature type="binding site" evidence="1">
    <location>
        <position position="256"/>
    </location>
    <ligand>
        <name>Zn(2+)</name>
        <dbReference type="ChEBI" id="CHEBI:29105"/>
        <label>1</label>
    </ligand>
</feature>
<feature type="binding site" evidence="1">
    <location>
        <position position="259"/>
    </location>
    <ligand>
        <name>Zn(2+)</name>
        <dbReference type="ChEBI" id="CHEBI:29105"/>
        <label>1</label>
    </ligand>
</feature>
<feature type="binding site" evidence="1">
    <location>
        <position position="271"/>
    </location>
    <ligand>
        <name>Zn(2+)</name>
        <dbReference type="ChEBI" id="CHEBI:29105"/>
        <label>2</label>
    </ligand>
</feature>
<feature type="binding site" evidence="1">
    <location>
        <position position="273"/>
    </location>
    <ligand>
        <name>Zn(2+)</name>
        <dbReference type="ChEBI" id="CHEBI:29105"/>
        <label>2</label>
    </ligand>
</feature>
<feature type="binding site" evidence="1">
    <location>
        <position position="276"/>
    </location>
    <ligand>
        <name>Zn(2+)</name>
        <dbReference type="ChEBI" id="CHEBI:29105"/>
        <label>1</label>
    </ligand>
</feature>
<feature type="binding site" evidence="1">
    <location>
        <position position="279"/>
    </location>
    <ligand>
        <name>Zn(2+)</name>
        <dbReference type="ChEBI" id="CHEBI:29105"/>
        <label>1</label>
    </ligand>
</feature>
<feature type="binding site" evidence="1">
    <location>
        <position position="290"/>
    </location>
    <ligand>
        <name>Zn(2+)</name>
        <dbReference type="ChEBI" id="CHEBI:29105"/>
        <label>2</label>
    </ligand>
</feature>
<feature type="binding site" evidence="1">
    <location>
        <position position="293"/>
    </location>
    <ligand>
        <name>Zn(2+)</name>
        <dbReference type="ChEBI" id="CHEBI:29105"/>
        <label>2</label>
    </ligand>
</feature>
<keyword id="KW-0472">Membrane</keyword>
<keyword id="KW-0479">Metal-binding</keyword>
<keyword id="KW-0576">Peroxisome</keyword>
<keyword id="KW-0962">Peroxisome biogenesis</keyword>
<keyword id="KW-0653">Protein transport</keyword>
<keyword id="KW-1185">Reference proteome</keyword>
<keyword id="KW-0808">Transferase</keyword>
<keyword id="KW-0812">Transmembrane</keyword>
<keyword id="KW-1133">Transmembrane helix</keyword>
<keyword id="KW-0813">Transport</keyword>
<keyword id="KW-0833">Ubl conjugation pathway</keyword>
<keyword id="KW-0862">Zinc</keyword>
<keyword id="KW-0863">Zinc-finger</keyword>
<reference key="1">
    <citation type="journal article" date="2000" name="Yeast">
        <title>A 38 kb segment containing the cdc2 gene from the left arm of fission yeast chromosome II: sequence analysis and characterization of the genomic DNA and cDNAs encoded on the segment.</title>
        <authorList>
            <person name="Machida M."/>
            <person name="Yamazaki S."/>
            <person name="Kunihiro S."/>
            <person name="Tanaka T."/>
            <person name="Kushida N."/>
            <person name="Jinno K."/>
            <person name="Haikawa Y."/>
            <person name="Yamazaki J."/>
            <person name="Yamamoto S."/>
            <person name="Sekine M."/>
            <person name="Oguchi A."/>
            <person name="Nagai Y."/>
            <person name="Sakai M."/>
            <person name="Aoki K."/>
            <person name="Ogura K."/>
            <person name="Kudoh Y."/>
            <person name="Kikuchi H."/>
            <person name="Zhang M.Q."/>
            <person name="Yanagida M."/>
        </authorList>
    </citation>
    <scope>NUCLEOTIDE SEQUENCE [LARGE SCALE GENOMIC DNA]</scope>
    <source>
        <strain>972 / ATCC 24843</strain>
    </source>
</reference>
<reference key="2">
    <citation type="journal article" date="2002" name="Nature">
        <title>The genome sequence of Schizosaccharomyces pombe.</title>
        <authorList>
            <person name="Wood V."/>
            <person name="Gwilliam R."/>
            <person name="Rajandream M.A."/>
            <person name="Lyne M.H."/>
            <person name="Lyne R."/>
            <person name="Stewart A."/>
            <person name="Sgouros J.G."/>
            <person name="Peat N."/>
            <person name="Hayles J."/>
            <person name="Baker S.G."/>
            <person name="Basham D."/>
            <person name="Bowman S."/>
            <person name="Brooks K."/>
            <person name="Brown D."/>
            <person name="Brown S."/>
            <person name="Chillingworth T."/>
            <person name="Churcher C.M."/>
            <person name="Collins M."/>
            <person name="Connor R."/>
            <person name="Cronin A."/>
            <person name="Davis P."/>
            <person name="Feltwell T."/>
            <person name="Fraser A."/>
            <person name="Gentles S."/>
            <person name="Goble A."/>
            <person name="Hamlin N."/>
            <person name="Harris D.E."/>
            <person name="Hidalgo J."/>
            <person name="Hodgson G."/>
            <person name="Holroyd S."/>
            <person name="Hornsby T."/>
            <person name="Howarth S."/>
            <person name="Huckle E.J."/>
            <person name="Hunt S."/>
            <person name="Jagels K."/>
            <person name="James K.D."/>
            <person name="Jones L."/>
            <person name="Jones M."/>
            <person name="Leather S."/>
            <person name="McDonald S."/>
            <person name="McLean J."/>
            <person name="Mooney P."/>
            <person name="Moule S."/>
            <person name="Mungall K.L."/>
            <person name="Murphy L.D."/>
            <person name="Niblett D."/>
            <person name="Odell C."/>
            <person name="Oliver K."/>
            <person name="O'Neil S."/>
            <person name="Pearson D."/>
            <person name="Quail M.A."/>
            <person name="Rabbinowitsch E."/>
            <person name="Rutherford K.M."/>
            <person name="Rutter S."/>
            <person name="Saunders D."/>
            <person name="Seeger K."/>
            <person name="Sharp S."/>
            <person name="Skelton J."/>
            <person name="Simmonds M.N."/>
            <person name="Squares R."/>
            <person name="Squares S."/>
            <person name="Stevens K."/>
            <person name="Taylor K."/>
            <person name="Taylor R.G."/>
            <person name="Tivey A."/>
            <person name="Walsh S.V."/>
            <person name="Warren T."/>
            <person name="Whitehead S."/>
            <person name="Woodward J.R."/>
            <person name="Volckaert G."/>
            <person name="Aert R."/>
            <person name="Robben J."/>
            <person name="Grymonprez B."/>
            <person name="Weltjens I."/>
            <person name="Vanstreels E."/>
            <person name="Rieger M."/>
            <person name="Schaefer M."/>
            <person name="Mueller-Auer S."/>
            <person name="Gabel C."/>
            <person name="Fuchs M."/>
            <person name="Duesterhoeft A."/>
            <person name="Fritzc C."/>
            <person name="Holzer E."/>
            <person name="Moestl D."/>
            <person name="Hilbert H."/>
            <person name="Borzym K."/>
            <person name="Langer I."/>
            <person name="Beck A."/>
            <person name="Lehrach H."/>
            <person name="Reinhardt R."/>
            <person name="Pohl T.M."/>
            <person name="Eger P."/>
            <person name="Zimmermann W."/>
            <person name="Wedler H."/>
            <person name="Wambutt R."/>
            <person name="Purnelle B."/>
            <person name="Goffeau A."/>
            <person name="Cadieu E."/>
            <person name="Dreano S."/>
            <person name="Gloux S."/>
            <person name="Lelaure V."/>
            <person name="Mottier S."/>
            <person name="Galibert F."/>
            <person name="Aves S.J."/>
            <person name="Xiang Z."/>
            <person name="Hunt C."/>
            <person name="Moore K."/>
            <person name="Hurst S.M."/>
            <person name="Lucas M."/>
            <person name="Rochet M."/>
            <person name="Gaillardin C."/>
            <person name="Tallada V.A."/>
            <person name="Garzon A."/>
            <person name="Thode G."/>
            <person name="Daga R.R."/>
            <person name="Cruzado L."/>
            <person name="Jimenez J."/>
            <person name="Sanchez M."/>
            <person name="del Rey F."/>
            <person name="Benito J."/>
            <person name="Dominguez A."/>
            <person name="Revuelta J.L."/>
            <person name="Moreno S."/>
            <person name="Armstrong J."/>
            <person name="Forsburg S.L."/>
            <person name="Cerutti L."/>
            <person name="Lowe T."/>
            <person name="McCombie W.R."/>
            <person name="Paulsen I."/>
            <person name="Potashkin J."/>
            <person name="Shpakovski G.V."/>
            <person name="Ussery D."/>
            <person name="Barrell B.G."/>
            <person name="Nurse P."/>
        </authorList>
    </citation>
    <scope>NUCLEOTIDE SEQUENCE [LARGE SCALE GENOMIC DNA]</scope>
    <source>
        <strain>972 / ATCC 24843</strain>
    </source>
</reference>
<evidence type="ECO:0000250" key="1">
    <source>
        <dbReference type="UniProtKB" id="G2Q0E2"/>
    </source>
</evidence>
<evidence type="ECO:0000250" key="2">
    <source>
        <dbReference type="UniProtKB" id="Q05568"/>
    </source>
</evidence>
<evidence type="ECO:0000255" key="3"/>
<evidence type="ECO:0000255" key="4">
    <source>
        <dbReference type="PROSITE-ProRule" id="PRU00175"/>
    </source>
</evidence>
<evidence type="ECO:0000305" key="5"/>
<protein>
    <recommendedName>
        <fullName>Peroxisome biogenesis factor 10</fullName>
        <ecNumber evidence="2">2.3.2.27</ecNumber>
    </recommendedName>
    <alternativeName>
        <fullName>Peroxin-10</fullName>
    </alternativeName>
    <alternativeName>
        <fullName>Peroxisomal biogenesis factor 10</fullName>
    </alternativeName>
    <alternativeName>
        <fullName>Peroxisome assembly protein 10</fullName>
    </alternativeName>
</protein>
<accession>Q9UUF0</accession>
<accession>O13628</accession>
<sequence>MHLSAHIDPLQIILCTEIDEACIQFIKSQIEGIARACGPRMQANFEGVLIPYVDVLGKFLYRACCLRYATMGEEAARIVLAKQDRSKGLVLATTGERMTSLIFSLVIDLVGVHVNKLLKQASYSSSFKLPFGLRNLLPEAVISKEKHLVYILNSFKPILLKLVSIIRFLCLTMKGHCATVSQLLLGLKYISLDEINPEEKKKVLTLLLLLGSRLIASILQHSNSYFDQHTISSITDERDLEDKNKLPFIPEGNRKCSLCMEFIHCPAATECGHIFCWSCINGWTSKKSECPLCRAFSSPSKIILLR</sequence>
<gene>
    <name type="primary">pas4</name>
    <name type="ORF">pi036</name>
    <name type="ORF">SPBC17A3.10</name>
</gene>
<name>PEX10_SCHPO</name>
<comment type="function">
    <text evidence="2">E3 ubiquitin-protein ligase component of a retrotranslocation channel required for peroxisome organization by mediating export of the PEX5 receptor from peroxisomes to the cytosol, thereby promoting PEX5 recycling. The retrotranslocation channel is composed of PEX2, PEX10 and PEX12; each subunit contributing transmembrane segments that coassemble into an open channel that specifically allows the passage of PEX5 through the peroxisomal membrane. PEX10 also regulates PEX5 recycling by acting as a E3 ubiquitin-protein ligase. When PEX5 recycling is compromised, PEX10 catalyzes polyubiquitination of PEX5 during its passage through the retrotranslocation channel, leading to its degradation.</text>
</comment>
<comment type="catalytic activity">
    <reaction evidence="2">
        <text>S-ubiquitinyl-[E2 ubiquitin-conjugating enzyme]-L-cysteine + [acceptor protein]-L-lysine = [E2 ubiquitin-conjugating enzyme]-L-cysteine + N(6)-ubiquitinyl-[acceptor protein]-L-lysine.</text>
        <dbReference type="EC" id="2.3.2.27"/>
    </reaction>
</comment>
<comment type="activity regulation">
    <text evidence="2">The E3 ubiquitin-protein ligase activity is stimulated by PEX12.</text>
</comment>
<comment type="pathway">
    <text evidence="2">Protein modification; protein ubiquitination.</text>
</comment>
<comment type="subunit">
    <text evidence="2">Component of the PEX2-PEX10-PEX12 retrotranslocation channel, composed of PEX2, PEX10 and PEX12.</text>
</comment>
<comment type="subcellular location">
    <subcellularLocation>
        <location evidence="2">Peroxisome membrane</location>
        <topology evidence="3">Multi-pass membrane protein</topology>
    </subcellularLocation>
</comment>
<comment type="domain">
    <text evidence="1">The three subunits of the retrotranslocation channel (PEX2, PEX10 and PEX12) coassemble in the membrane into a channel with an open 10 Angstrom pore. The RING-type zinc-fingers that catalyze PEX5 receptor ubiquitination are positioned above the pore on the cytosolic side of the complex.</text>
</comment>
<comment type="similarity">
    <text evidence="5">Belongs to the pex2/pex10/pex12 family.</text>
</comment>
<comment type="sequence caution" evidence="5">
    <conflict type="erroneous gene model prediction">
        <sequence resource="EMBL-CDS" id="BAA21416"/>
    </conflict>
</comment>